<sequence>MASVYENSYMIVLIFLLLGILLPVVALTLGRMLRPNKPSAAKATTYESGIEPFHDANIRFHARYYIFALLFVIFDVETLFLYPWAVAYDKLGLFALIEMLIFVVMLLVGLAYAWKKKVLQWL</sequence>
<reference key="1">
    <citation type="journal article" date="2003" name="Nature">
        <title>Genome sequence of Bacillus cereus and comparative analysis with Bacillus anthracis.</title>
        <authorList>
            <person name="Ivanova N."/>
            <person name="Sorokin A."/>
            <person name="Anderson I."/>
            <person name="Galleron N."/>
            <person name="Candelon B."/>
            <person name="Kapatral V."/>
            <person name="Bhattacharyya A."/>
            <person name="Reznik G."/>
            <person name="Mikhailova N."/>
            <person name="Lapidus A."/>
            <person name="Chu L."/>
            <person name="Mazur M."/>
            <person name="Goltsman E."/>
            <person name="Larsen N."/>
            <person name="D'Souza M."/>
            <person name="Walunas T."/>
            <person name="Grechkin Y."/>
            <person name="Pusch G."/>
            <person name="Haselkorn R."/>
            <person name="Fonstein M."/>
            <person name="Ehrlich S.D."/>
            <person name="Overbeek R."/>
            <person name="Kyrpides N.C."/>
        </authorList>
    </citation>
    <scope>NUCLEOTIDE SEQUENCE [LARGE SCALE GENOMIC DNA]</scope>
    <source>
        <strain>ATCC 14579 / DSM 31 / CCUG 7414 / JCM 2152 / NBRC 15305 / NCIMB 9373 / NCTC 2599 / NRRL B-3711</strain>
    </source>
</reference>
<feature type="chain" id="PRO_0000362621" description="NADH-quinone oxidoreductase subunit A">
    <location>
        <begin position="1"/>
        <end position="122"/>
    </location>
</feature>
<feature type="transmembrane region" description="Helical" evidence="1">
    <location>
        <begin position="10"/>
        <end position="30"/>
    </location>
</feature>
<feature type="transmembrane region" description="Helical" evidence="1">
    <location>
        <begin position="66"/>
        <end position="86"/>
    </location>
</feature>
<feature type="transmembrane region" description="Helical" evidence="1">
    <location>
        <begin position="91"/>
        <end position="111"/>
    </location>
</feature>
<keyword id="KW-1003">Cell membrane</keyword>
<keyword id="KW-0472">Membrane</keyword>
<keyword id="KW-0520">NAD</keyword>
<keyword id="KW-0874">Quinone</keyword>
<keyword id="KW-1185">Reference proteome</keyword>
<keyword id="KW-1278">Translocase</keyword>
<keyword id="KW-0812">Transmembrane</keyword>
<keyword id="KW-1133">Transmembrane helix</keyword>
<keyword id="KW-0813">Transport</keyword>
<gene>
    <name evidence="1" type="primary">nuoA</name>
    <name type="ordered locus">BC_5301</name>
</gene>
<protein>
    <recommendedName>
        <fullName evidence="1">NADH-quinone oxidoreductase subunit A</fullName>
        <ecNumber evidence="1">7.1.1.-</ecNumber>
    </recommendedName>
    <alternativeName>
        <fullName evidence="1">NADH dehydrogenase I subunit A</fullName>
    </alternativeName>
    <alternativeName>
        <fullName evidence="1">NDH-1 subunit A</fullName>
    </alternativeName>
    <alternativeName>
        <fullName evidence="1">NUO1</fullName>
    </alternativeName>
</protein>
<comment type="function">
    <text evidence="1">NDH-1 shuttles electrons from NADH, via FMN and iron-sulfur (Fe-S) centers, to quinones in the respiratory chain. The immediate electron acceptor for the enzyme in this species is believed to be a menaquinone. Couples the redox reaction to proton translocation (for every two electrons transferred, four hydrogen ions are translocated across the cytoplasmic membrane), and thus conserves the redox energy in a proton gradient.</text>
</comment>
<comment type="catalytic activity">
    <reaction evidence="1">
        <text>a quinone + NADH + 5 H(+)(in) = a quinol + NAD(+) + 4 H(+)(out)</text>
        <dbReference type="Rhea" id="RHEA:57888"/>
        <dbReference type="ChEBI" id="CHEBI:15378"/>
        <dbReference type="ChEBI" id="CHEBI:24646"/>
        <dbReference type="ChEBI" id="CHEBI:57540"/>
        <dbReference type="ChEBI" id="CHEBI:57945"/>
        <dbReference type="ChEBI" id="CHEBI:132124"/>
    </reaction>
</comment>
<comment type="subunit">
    <text evidence="1">NDH-1 is composed of 14 different subunits. Subunits NuoA, H, J, K, L, M, N constitute the membrane sector of the complex.</text>
</comment>
<comment type="subcellular location">
    <subcellularLocation>
        <location evidence="1">Cell membrane</location>
        <topology evidence="1">Multi-pass membrane protein</topology>
    </subcellularLocation>
</comment>
<comment type="similarity">
    <text evidence="1">Belongs to the complex I subunit 3 family.</text>
</comment>
<evidence type="ECO:0000255" key="1">
    <source>
        <dbReference type="HAMAP-Rule" id="MF_01394"/>
    </source>
</evidence>
<proteinExistence type="inferred from homology"/>
<accession>Q814W6</accession>
<dbReference type="EC" id="7.1.1.-" evidence="1"/>
<dbReference type="EMBL" id="AE016877">
    <property type="protein sequence ID" value="AAP12165.1"/>
    <property type="molecule type" value="Genomic_DNA"/>
</dbReference>
<dbReference type="RefSeq" id="NP_834964.1">
    <property type="nucleotide sequence ID" value="NC_004722.1"/>
</dbReference>
<dbReference type="RefSeq" id="WP_000179273.1">
    <property type="nucleotide sequence ID" value="NZ_CP138336.1"/>
</dbReference>
<dbReference type="SMR" id="Q814W6"/>
<dbReference type="STRING" id="226900.BC_5301"/>
<dbReference type="GeneID" id="93005823"/>
<dbReference type="KEGG" id="bce:BC5301"/>
<dbReference type="PATRIC" id="fig|226900.8.peg.5472"/>
<dbReference type="HOGENOM" id="CLU_119549_1_1_9"/>
<dbReference type="OrthoDB" id="9791970at2"/>
<dbReference type="Proteomes" id="UP000001417">
    <property type="component" value="Chromosome"/>
</dbReference>
<dbReference type="GO" id="GO:0030964">
    <property type="term" value="C:NADH dehydrogenase complex"/>
    <property type="evidence" value="ECO:0000318"/>
    <property type="project" value="GO_Central"/>
</dbReference>
<dbReference type="GO" id="GO:0005886">
    <property type="term" value="C:plasma membrane"/>
    <property type="evidence" value="ECO:0007669"/>
    <property type="project" value="UniProtKB-SubCell"/>
</dbReference>
<dbReference type="GO" id="GO:0008137">
    <property type="term" value="F:NADH dehydrogenase (ubiquinone) activity"/>
    <property type="evidence" value="ECO:0000318"/>
    <property type="project" value="GO_Central"/>
</dbReference>
<dbReference type="GO" id="GO:0050136">
    <property type="term" value="F:NADH:ubiquinone reductase (non-electrogenic) activity"/>
    <property type="evidence" value="ECO:0007669"/>
    <property type="project" value="UniProtKB-UniRule"/>
</dbReference>
<dbReference type="GO" id="GO:0048038">
    <property type="term" value="F:quinone binding"/>
    <property type="evidence" value="ECO:0007669"/>
    <property type="project" value="UniProtKB-KW"/>
</dbReference>
<dbReference type="FunFam" id="1.20.58.1610:FF:000005">
    <property type="entry name" value="NADH-quinone oxidoreductase subunit A"/>
    <property type="match status" value="1"/>
</dbReference>
<dbReference type="Gene3D" id="1.20.58.1610">
    <property type="entry name" value="NADH:ubiquinone/plastoquinone oxidoreductase, chain 3"/>
    <property type="match status" value="1"/>
</dbReference>
<dbReference type="HAMAP" id="MF_01394">
    <property type="entry name" value="NDH1_NuoA"/>
    <property type="match status" value="1"/>
</dbReference>
<dbReference type="InterPro" id="IPR023043">
    <property type="entry name" value="NAD(P)H_OxRDtase_bac/plastid"/>
</dbReference>
<dbReference type="InterPro" id="IPR000440">
    <property type="entry name" value="NADH_UbQ/plastoQ_OxRdtase_su3"/>
</dbReference>
<dbReference type="InterPro" id="IPR038430">
    <property type="entry name" value="NDAH_ubi_oxred_su3_sf"/>
</dbReference>
<dbReference type="NCBIfam" id="NF005839">
    <property type="entry name" value="PRK07756.1"/>
    <property type="match status" value="1"/>
</dbReference>
<dbReference type="PANTHER" id="PTHR11058">
    <property type="entry name" value="NADH-UBIQUINONE OXIDOREDUCTASE CHAIN 3"/>
    <property type="match status" value="1"/>
</dbReference>
<dbReference type="PANTHER" id="PTHR11058:SF9">
    <property type="entry name" value="NADH-UBIQUINONE OXIDOREDUCTASE CHAIN 3"/>
    <property type="match status" value="1"/>
</dbReference>
<dbReference type="Pfam" id="PF00507">
    <property type="entry name" value="Oxidored_q4"/>
    <property type="match status" value="1"/>
</dbReference>
<organism>
    <name type="scientific">Bacillus cereus (strain ATCC 14579 / DSM 31 / CCUG 7414 / JCM 2152 / NBRC 15305 / NCIMB 9373 / NCTC 2599 / NRRL B-3711)</name>
    <dbReference type="NCBI Taxonomy" id="226900"/>
    <lineage>
        <taxon>Bacteria</taxon>
        <taxon>Bacillati</taxon>
        <taxon>Bacillota</taxon>
        <taxon>Bacilli</taxon>
        <taxon>Bacillales</taxon>
        <taxon>Bacillaceae</taxon>
        <taxon>Bacillus</taxon>
        <taxon>Bacillus cereus group</taxon>
    </lineage>
</organism>
<name>NUOA_BACCR</name>